<gene>
    <name evidence="1" type="primary">hutH</name>
    <name type="ordered locus">glr3066</name>
</gene>
<keyword id="KW-0963">Cytoplasm</keyword>
<keyword id="KW-0369">Histidine metabolism</keyword>
<keyword id="KW-0456">Lyase</keyword>
<keyword id="KW-1185">Reference proteome</keyword>
<name>HUTH_GLOVI</name>
<organism>
    <name type="scientific">Gloeobacter violaceus (strain ATCC 29082 / PCC 7421)</name>
    <dbReference type="NCBI Taxonomy" id="251221"/>
    <lineage>
        <taxon>Bacteria</taxon>
        <taxon>Bacillati</taxon>
        <taxon>Cyanobacteriota</taxon>
        <taxon>Cyanophyceae</taxon>
        <taxon>Gloeobacterales</taxon>
        <taxon>Gloeobacteraceae</taxon>
        <taxon>Gloeobacter</taxon>
    </lineage>
</organism>
<accession>Q7NCB3</accession>
<comment type="catalytic activity">
    <reaction evidence="1">
        <text>L-histidine = trans-urocanate + NH4(+)</text>
        <dbReference type="Rhea" id="RHEA:21232"/>
        <dbReference type="ChEBI" id="CHEBI:17771"/>
        <dbReference type="ChEBI" id="CHEBI:28938"/>
        <dbReference type="ChEBI" id="CHEBI:57595"/>
        <dbReference type="EC" id="4.3.1.3"/>
    </reaction>
</comment>
<comment type="pathway">
    <text evidence="1">Amino-acid degradation; L-histidine degradation into L-glutamate; N-formimidoyl-L-glutamate from L-histidine: step 1/3.</text>
</comment>
<comment type="subcellular location">
    <subcellularLocation>
        <location evidence="1">Cytoplasm</location>
    </subcellularLocation>
</comment>
<comment type="PTM">
    <text evidence="1">Contains an active site 4-methylidene-imidazol-5-one (MIO), which is formed autocatalytically by cyclization and dehydration of residues Ala-Ser-Gly.</text>
</comment>
<comment type="similarity">
    <text evidence="1">Belongs to the PAL/histidase family.</text>
</comment>
<dbReference type="EC" id="4.3.1.3" evidence="1"/>
<dbReference type="EMBL" id="BA000045">
    <property type="protein sequence ID" value="BAC91007.1"/>
    <property type="molecule type" value="Genomic_DNA"/>
</dbReference>
<dbReference type="RefSeq" id="NP_926012.1">
    <property type="nucleotide sequence ID" value="NC_005125.1"/>
</dbReference>
<dbReference type="RefSeq" id="WP_011143059.1">
    <property type="nucleotide sequence ID" value="NC_005125.1"/>
</dbReference>
<dbReference type="SMR" id="Q7NCB3"/>
<dbReference type="STRING" id="251221.gene:10760571"/>
<dbReference type="EnsemblBacteria" id="BAC91007">
    <property type="protein sequence ID" value="BAC91007"/>
    <property type="gene ID" value="BAC91007"/>
</dbReference>
<dbReference type="KEGG" id="gvi:glr3066"/>
<dbReference type="PATRIC" id="fig|251221.4.peg.3096"/>
<dbReference type="eggNOG" id="COG2986">
    <property type="taxonomic scope" value="Bacteria"/>
</dbReference>
<dbReference type="HOGENOM" id="CLU_014801_4_0_3"/>
<dbReference type="InParanoid" id="Q7NCB3"/>
<dbReference type="OrthoDB" id="9806955at2"/>
<dbReference type="PhylomeDB" id="Q7NCB3"/>
<dbReference type="UniPathway" id="UPA00379">
    <property type="reaction ID" value="UER00549"/>
</dbReference>
<dbReference type="Proteomes" id="UP000000557">
    <property type="component" value="Chromosome"/>
</dbReference>
<dbReference type="GO" id="GO:0005737">
    <property type="term" value="C:cytoplasm"/>
    <property type="evidence" value="ECO:0007669"/>
    <property type="project" value="UniProtKB-SubCell"/>
</dbReference>
<dbReference type="GO" id="GO:0004397">
    <property type="term" value="F:histidine ammonia-lyase activity"/>
    <property type="evidence" value="ECO:0000318"/>
    <property type="project" value="GO_Central"/>
</dbReference>
<dbReference type="GO" id="GO:0006548">
    <property type="term" value="P:L-histidine catabolic process"/>
    <property type="evidence" value="ECO:0000318"/>
    <property type="project" value="GO_Central"/>
</dbReference>
<dbReference type="GO" id="GO:0019556">
    <property type="term" value="P:L-histidine catabolic process to glutamate and formamide"/>
    <property type="evidence" value="ECO:0007669"/>
    <property type="project" value="UniProtKB-UniPathway"/>
</dbReference>
<dbReference type="GO" id="GO:0019557">
    <property type="term" value="P:L-histidine catabolic process to glutamate and formate"/>
    <property type="evidence" value="ECO:0007669"/>
    <property type="project" value="UniProtKB-UniPathway"/>
</dbReference>
<dbReference type="CDD" id="cd00332">
    <property type="entry name" value="PAL-HAL"/>
    <property type="match status" value="1"/>
</dbReference>
<dbReference type="FunFam" id="1.10.275.10:FF:000005">
    <property type="entry name" value="Histidine ammonia-lyase"/>
    <property type="match status" value="1"/>
</dbReference>
<dbReference type="FunFam" id="1.20.200.10:FF:000003">
    <property type="entry name" value="Histidine ammonia-lyase"/>
    <property type="match status" value="1"/>
</dbReference>
<dbReference type="Gene3D" id="1.20.200.10">
    <property type="entry name" value="Fumarase/aspartase (Central domain)"/>
    <property type="match status" value="1"/>
</dbReference>
<dbReference type="Gene3D" id="1.10.275.10">
    <property type="entry name" value="Fumarase/aspartase (N-terminal domain)"/>
    <property type="match status" value="1"/>
</dbReference>
<dbReference type="HAMAP" id="MF_00229">
    <property type="entry name" value="His_ammonia_lyase"/>
    <property type="match status" value="1"/>
</dbReference>
<dbReference type="InterPro" id="IPR001106">
    <property type="entry name" value="Aromatic_Lyase"/>
</dbReference>
<dbReference type="InterPro" id="IPR024083">
    <property type="entry name" value="Fumarase/histidase_N"/>
</dbReference>
<dbReference type="InterPro" id="IPR005921">
    <property type="entry name" value="HutH"/>
</dbReference>
<dbReference type="InterPro" id="IPR008948">
    <property type="entry name" value="L-Aspartase-like"/>
</dbReference>
<dbReference type="InterPro" id="IPR022313">
    <property type="entry name" value="Phe/His_NH3-lyase_AS"/>
</dbReference>
<dbReference type="NCBIfam" id="TIGR01225">
    <property type="entry name" value="hutH"/>
    <property type="match status" value="1"/>
</dbReference>
<dbReference type="NCBIfam" id="NF006871">
    <property type="entry name" value="PRK09367.1"/>
    <property type="match status" value="1"/>
</dbReference>
<dbReference type="PANTHER" id="PTHR10362">
    <property type="entry name" value="HISTIDINE AMMONIA-LYASE"/>
    <property type="match status" value="1"/>
</dbReference>
<dbReference type="Pfam" id="PF00221">
    <property type="entry name" value="Lyase_aromatic"/>
    <property type="match status" value="1"/>
</dbReference>
<dbReference type="SUPFAM" id="SSF48557">
    <property type="entry name" value="L-aspartase-like"/>
    <property type="match status" value="1"/>
</dbReference>
<dbReference type="PROSITE" id="PS00488">
    <property type="entry name" value="PAL_HISTIDASE"/>
    <property type="match status" value="1"/>
</dbReference>
<proteinExistence type="inferred from homology"/>
<reference key="1">
    <citation type="journal article" date="2003" name="DNA Res.">
        <title>Complete genome structure of Gloeobacter violaceus PCC 7421, a cyanobacterium that lacks thylakoids.</title>
        <authorList>
            <person name="Nakamura Y."/>
            <person name="Kaneko T."/>
            <person name="Sato S."/>
            <person name="Mimuro M."/>
            <person name="Miyashita H."/>
            <person name="Tsuchiya T."/>
            <person name="Sasamoto S."/>
            <person name="Watanabe A."/>
            <person name="Kawashima K."/>
            <person name="Kishida Y."/>
            <person name="Kiyokawa C."/>
            <person name="Kohara M."/>
            <person name="Matsumoto M."/>
            <person name="Matsuno A."/>
            <person name="Nakazaki N."/>
            <person name="Shimpo S."/>
            <person name="Takeuchi C."/>
            <person name="Yamada M."/>
            <person name="Tabata S."/>
        </authorList>
    </citation>
    <scope>NUCLEOTIDE SEQUENCE [LARGE SCALE GENOMIC DNA]</scope>
    <source>
        <strain>ATCC 29082 / PCC 7421</strain>
    </source>
</reference>
<sequence>MKLLTDWLVLDGCSLAVDDLVAVARGGVPVRLSPASLELVRRSRAFVEALLEGDEIVYGITTGFGYFKNRRIPRSAVEQLQQNLLMSSAAGLGEPFGREVVRAMLLLRANTLAQGYSGVRPETLQLLVAMLNRGVHPVVPCRGSVGASGDLAPLAHLALVLTGEGEAEVGGEVLPGAAALARAGLEPIRLGAKEGLALINGTQAMSALGALTVHRAQRLAKLADLACAMTLEATLGSRSAFLPHFHRLRPHPGQQSSARNLLVLTEDSALIASHAGCDRVQDAYSLRCAPQVHGASLDAISYAAGVIAIEINSVTDNPLIFADTGQVVTGGHFHGQPVAMASDVLAIALAELADISERRTERLVNADYSNGLPMFLTEAGGLHSGYMVAQYTAASLVSENKVLAHPACVDSIPTSAGQEDHVSMGLTAARKAVTVCDNCERVIAIELMCAAQALDLRGKLTPGRGSRVGLEVIRAAVPHLESDRIVSRDIEKVVELMADGHLLEAVEAACGRLD</sequence>
<evidence type="ECO:0000255" key="1">
    <source>
        <dbReference type="HAMAP-Rule" id="MF_00229"/>
    </source>
</evidence>
<protein>
    <recommendedName>
        <fullName evidence="1">Histidine ammonia-lyase</fullName>
        <shortName evidence="1">Histidase</shortName>
        <ecNumber evidence="1">4.3.1.3</ecNumber>
    </recommendedName>
</protein>
<feature type="chain" id="PRO_0000161007" description="Histidine ammonia-lyase">
    <location>
        <begin position="1"/>
        <end position="514"/>
    </location>
</feature>
<feature type="modified residue" description="2,3-didehydroalanine (Ser)" evidence="1">
    <location>
        <position position="148"/>
    </location>
</feature>
<feature type="cross-link" description="5-imidazolinone (Ala-Gly)" evidence="1">
    <location>
        <begin position="147"/>
        <end position="149"/>
    </location>
</feature>